<proteinExistence type="inferred from homology"/>
<organism>
    <name type="scientific">Staphylococcus aureus (strain JH9)</name>
    <dbReference type="NCBI Taxonomy" id="359786"/>
    <lineage>
        <taxon>Bacteria</taxon>
        <taxon>Bacillati</taxon>
        <taxon>Bacillota</taxon>
        <taxon>Bacilli</taxon>
        <taxon>Bacillales</taxon>
        <taxon>Staphylococcaceae</taxon>
        <taxon>Staphylococcus</taxon>
    </lineage>
</organism>
<evidence type="ECO:0000255" key="1">
    <source>
        <dbReference type="HAMAP-Rule" id="MF_01210"/>
    </source>
</evidence>
<gene>
    <name evidence="1" type="primary">carB</name>
    <name type="ordered locus">SaurJH9_1262</name>
</gene>
<keyword id="KW-0028">Amino-acid biosynthesis</keyword>
<keyword id="KW-0055">Arginine biosynthesis</keyword>
<keyword id="KW-0067">ATP-binding</keyword>
<keyword id="KW-0436">Ligase</keyword>
<keyword id="KW-0460">Magnesium</keyword>
<keyword id="KW-0464">Manganese</keyword>
<keyword id="KW-0479">Metal-binding</keyword>
<keyword id="KW-0547">Nucleotide-binding</keyword>
<keyword id="KW-0665">Pyrimidine biosynthesis</keyword>
<keyword id="KW-0677">Repeat</keyword>
<accession>A5IS88</accession>
<sequence length="1057" mass="117172">MPKRNDIKTILVIGSGPIIIGQAAEFDYAGTQACLALKEEGYRVILVNSNPATIMTDKEIADKVYIEPLTHDFIARIIRKEQPDALLPTLGGQTGLNMAIQLHESGVLQDNNVQLLGTELTSIQQAEDREMFRTLMNDLNVPVPESDIVNTVEQAFKFKEQVGYPLIVRPAFTMGGTGGGICHNDEELHEIVSNGLHYSPATQCLLEKSIAGFKEIEYEVMRDKNDNAIVVCNMENIDPVGIHTGDSIVVAPSQTLSDVEYQMLRDVSLKVIRALGIEGGCNVQLALDPHSFDYYIIEVNPRVSRSSALASKATGYPIAKLAAKIAVGLTLDEMLNPITGTSYAAFEPTLDYVISKIPRFPFDKFEKGERELGTQMKATGEVMAIGRTYEESLLKAIRSLEYGVHHLGLPNGESFDLDYIKERISHQDDERLFFIGEAIRRGTTLEEIHNMTQIDYFFLHKFQNIIDIEHQLKEHQGDLEYLKYAKDYGFSDKTIAHRFNMTEEEVYQLRMENDIKPVYKMVDTCAAEFESSTPYYYGTYETENESIVTDKEKILVLGSGPIRIGQGVEFDYATVHAVWAIQKAGYEAIIVNNNPETVSTDFSISDKLYFEPLTEEDVMNIINLEKPKGVVVQFGGQTAINLADKLAKHGVKILGTSLENLNRAEDRKEFEALLRKINVPQPQGKSATSPEEALANAAEIGYPVVVRPSYVLGGRAMEIVDNDKELENYMTQAVKASPEHPVLVDRYLTGKEIEVDAICDGETVIIPGIMEHIERAGVHSGDSIAVYPPQTLTEDELATLEDYTIKLAKGLNIIGLINIQFVIAHDGVYVLEVNPRSSRTVPFLSKITDIPMAQLAMRAIIGEKLTDMGYQEGVQPYAEGVFVKAPVFSFNKLKNVDITLGPEMKSTGEVMGKDTTLEKALFKGLTGSGVEVKDHGTVLMTVSDKDKEEVVKLAQRLNEVGYKILATSGTANKLAEYDIPAEVVGKIGGENDLLTRIQNGDVQIVINTMTKGKEVERDGFQIRRTTVENGIPCLTSLDTANALTNVIESMTFTMRQM</sequence>
<protein>
    <recommendedName>
        <fullName evidence="1">Carbamoyl phosphate synthase large chain</fullName>
        <ecNumber evidence="1">6.3.4.16</ecNumber>
        <ecNumber evidence="1">6.3.5.5</ecNumber>
    </recommendedName>
    <alternativeName>
        <fullName evidence="1">Carbamoyl phosphate synthetase ammonia chain</fullName>
    </alternativeName>
</protein>
<comment type="function">
    <text evidence="1">Large subunit of the glutamine-dependent carbamoyl phosphate synthetase (CPSase). CPSase catalyzes the formation of carbamoyl phosphate from the ammonia moiety of glutamine, carbonate, and phosphate donated by ATP, constituting the first step of 2 biosynthetic pathways, one leading to arginine and/or urea and the other to pyrimidine nucleotides. The large subunit (synthetase) binds the substrates ammonia (free or transferred from glutamine from the small subunit), hydrogencarbonate and ATP and carries out an ATP-coupled ligase reaction, activating hydrogencarbonate by forming carboxy phosphate which reacts with ammonia to form carbamoyl phosphate.</text>
</comment>
<comment type="catalytic activity">
    <reaction evidence="1">
        <text>hydrogencarbonate + L-glutamine + 2 ATP + H2O = carbamoyl phosphate + L-glutamate + 2 ADP + phosphate + 2 H(+)</text>
        <dbReference type="Rhea" id="RHEA:18633"/>
        <dbReference type="ChEBI" id="CHEBI:15377"/>
        <dbReference type="ChEBI" id="CHEBI:15378"/>
        <dbReference type="ChEBI" id="CHEBI:17544"/>
        <dbReference type="ChEBI" id="CHEBI:29985"/>
        <dbReference type="ChEBI" id="CHEBI:30616"/>
        <dbReference type="ChEBI" id="CHEBI:43474"/>
        <dbReference type="ChEBI" id="CHEBI:58228"/>
        <dbReference type="ChEBI" id="CHEBI:58359"/>
        <dbReference type="ChEBI" id="CHEBI:456216"/>
        <dbReference type="EC" id="6.3.5.5"/>
    </reaction>
</comment>
<comment type="catalytic activity">
    <molecule>Carbamoyl phosphate synthase large chain</molecule>
    <reaction evidence="1">
        <text>hydrogencarbonate + NH4(+) + 2 ATP = carbamoyl phosphate + 2 ADP + phosphate + 2 H(+)</text>
        <dbReference type="Rhea" id="RHEA:18029"/>
        <dbReference type="ChEBI" id="CHEBI:15378"/>
        <dbReference type="ChEBI" id="CHEBI:17544"/>
        <dbReference type="ChEBI" id="CHEBI:28938"/>
        <dbReference type="ChEBI" id="CHEBI:30616"/>
        <dbReference type="ChEBI" id="CHEBI:43474"/>
        <dbReference type="ChEBI" id="CHEBI:58228"/>
        <dbReference type="ChEBI" id="CHEBI:456216"/>
        <dbReference type="EC" id="6.3.4.16"/>
    </reaction>
</comment>
<comment type="cofactor">
    <cofactor evidence="1">
        <name>Mg(2+)</name>
        <dbReference type="ChEBI" id="CHEBI:18420"/>
    </cofactor>
    <cofactor evidence="1">
        <name>Mn(2+)</name>
        <dbReference type="ChEBI" id="CHEBI:29035"/>
    </cofactor>
    <text evidence="1">Binds 4 Mg(2+) or Mn(2+) ions per subunit.</text>
</comment>
<comment type="pathway">
    <text evidence="1">Amino-acid biosynthesis; L-arginine biosynthesis; carbamoyl phosphate from bicarbonate: step 1/1.</text>
</comment>
<comment type="pathway">
    <text evidence="1">Pyrimidine metabolism; UMP biosynthesis via de novo pathway; (S)-dihydroorotate from bicarbonate: step 1/3.</text>
</comment>
<comment type="subunit">
    <text evidence="1">Composed of two chains; the small (or glutamine) chain promotes the hydrolysis of glutamine to ammonia, which is used by the large (or ammonia) chain to synthesize carbamoyl phosphate. Tetramer of heterodimers (alpha,beta)4.</text>
</comment>
<comment type="domain">
    <text evidence="1">The large subunit is composed of 2 ATP-grasp domains that are involved in binding the 2 ATP molecules needed for carbamoyl phosphate synthesis. The N-terminal ATP-grasp domain (referred to as the carboxyphosphate synthetic component) catalyzes the ATP-dependent phosphorylation of hydrogencarbonate to carboxyphosphate and the subsequent nucleophilic attack by ammonia to form a carbamate intermediate. The C-terminal ATP-grasp domain (referred to as the carbamoyl phosphate synthetic component) then catalyzes the phosphorylation of carbamate with the second ATP to form the end product carbamoyl phosphate. The reactive and unstable enzyme intermediates are sequentially channeled from one active site to the next through the interior of the protein over a distance of at least 96 A.</text>
</comment>
<comment type="similarity">
    <text evidence="1">Belongs to the CarB family.</text>
</comment>
<name>CARB_STAA9</name>
<feature type="chain" id="PRO_1000085563" description="Carbamoyl phosphate synthase large chain">
    <location>
        <begin position="1"/>
        <end position="1057"/>
    </location>
</feature>
<feature type="domain" description="ATP-grasp 1" evidence="1">
    <location>
        <begin position="133"/>
        <end position="327"/>
    </location>
</feature>
<feature type="domain" description="ATP-grasp 2" evidence="1">
    <location>
        <begin position="671"/>
        <end position="861"/>
    </location>
</feature>
<feature type="domain" description="MGS-like" evidence="1">
    <location>
        <begin position="930"/>
        <end position="1057"/>
    </location>
</feature>
<feature type="region of interest" description="Carboxyphosphate synthetic domain" evidence="1">
    <location>
        <begin position="1"/>
        <end position="401"/>
    </location>
</feature>
<feature type="region of interest" description="Oligomerization domain" evidence="1">
    <location>
        <begin position="402"/>
        <end position="546"/>
    </location>
</feature>
<feature type="region of interest" description="Carbamoyl phosphate synthetic domain" evidence="1">
    <location>
        <begin position="547"/>
        <end position="929"/>
    </location>
</feature>
<feature type="region of interest" description="Allosteric domain" evidence="1">
    <location>
        <begin position="930"/>
        <end position="1057"/>
    </location>
</feature>
<feature type="binding site" evidence="1">
    <location>
        <position position="129"/>
    </location>
    <ligand>
        <name>ATP</name>
        <dbReference type="ChEBI" id="CHEBI:30616"/>
        <label>1</label>
    </ligand>
</feature>
<feature type="binding site" evidence="1">
    <location>
        <position position="169"/>
    </location>
    <ligand>
        <name>ATP</name>
        <dbReference type="ChEBI" id="CHEBI:30616"/>
        <label>1</label>
    </ligand>
</feature>
<feature type="binding site" evidence="1">
    <location>
        <position position="175"/>
    </location>
    <ligand>
        <name>ATP</name>
        <dbReference type="ChEBI" id="CHEBI:30616"/>
        <label>1</label>
    </ligand>
</feature>
<feature type="binding site" evidence="1">
    <location>
        <position position="176"/>
    </location>
    <ligand>
        <name>ATP</name>
        <dbReference type="ChEBI" id="CHEBI:30616"/>
        <label>1</label>
    </ligand>
</feature>
<feature type="binding site" evidence="1">
    <location>
        <position position="208"/>
    </location>
    <ligand>
        <name>ATP</name>
        <dbReference type="ChEBI" id="CHEBI:30616"/>
        <label>1</label>
    </ligand>
</feature>
<feature type="binding site" evidence="1">
    <location>
        <position position="210"/>
    </location>
    <ligand>
        <name>ATP</name>
        <dbReference type="ChEBI" id="CHEBI:30616"/>
        <label>1</label>
    </ligand>
</feature>
<feature type="binding site" evidence="1">
    <location>
        <position position="215"/>
    </location>
    <ligand>
        <name>ATP</name>
        <dbReference type="ChEBI" id="CHEBI:30616"/>
        <label>1</label>
    </ligand>
</feature>
<feature type="binding site" evidence="1">
    <location>
        <position position="241"/>
    </location>
    <ligand>
        <name>ATP</name>
        <dbReference type="ChEBI" id="CHEBI:30616"/>
        <label>1</label>
    </ligand>
</feature>
<feature type="binding site" evidence="1">
    <location>
        <position position="242"/>
    </location>
    <ligand>
        <name>ATP</name>
        <dbReference type="ChEBI" id="CHEBI:30616"/>
        <label>1</label>
    </ligand>
</feature>
<feature type="binding site" evidence="1">
    <location>
        <position position="243"/>
    </location>
    <ligand>
        <name>ATP</name>
        <dbReference type="ChEBI" id="CHEBI:30616"/>
        <label>1</label>
    </ligand>
</feature>
<feature type="binding site" evidence="1">
    <location>
        <position position="284"/>
    </location>
    <ligand>
        <name>ATP</name>
        <dbReference type="ChEBI" id="CHEBI:30616"/>
        <label>1</label>
    </ligand>
</feature>
<feature type="binding site" evidence="1">
    <location>
        <position position="284"/>
    </location>
    <ligand>
        <name>Mg(2+)</name>
        <dbReference type="ChEBI" id="CHEBI:18420"/>
        <label>1</label>
    </ligand>
</feature>
<feature type="binding site" evidence="1">
    <location>
        <position position="284"/>
    </location>
    <ligand>
        <name>Mn(2+)</name>
        <dbReference type="ChEBI" id="CHEBI:29035"/>
        <label>1</label>
    </ligand>
</feature>
<feature type="binding site" evidence="1">
    <location>
        <position position="298"/>
    </location>
    <ligand>
        <name>ATP</name>
        <dbReference type="ChEBI" id="CHEBI:30616"/>
        <label>1</label>
    </ligand>
</feature>
<feature type="binding site" evidence="1">
    <location>
        <position position="298"/>
    </location>
    <ligand>
        <name>Mg(2+)</name>
        <dbReference type="ChEBI" id="CHEBI:18420"/>
        <label>1</label>
    </ligand>
</feature>
<feature type="binding site" evidence="1">
    <location>
        <position position="298"/>
    </location>
    <ligand>
        <name>Mg(2+)</name>
        <dbReference type="ChEBI" id="CHEBI:18420"/>
        <label>2</label>
    </ligand>
</feature>
<feature type="binding site" evidence="1">
    <location>
        <position position="298"/>
    </location>
    <ligand>
        <name>Mn(2+)</name>
        <dbReference type="ChEBI" id="CHEBI:29035"/>
        <label>1</label>
    </ligand>
</feature>
<feature type="binding site" evidence="1">
    <location>
        <position position="298"/>
    </location>
    <ligand>
        <name>Mn(2+)</name>
        <dbReference type="ChEBI" id="CHEBI:29035"/>
        <label>2</label>
    </ligand>
</feature>
<feature type="binding site" evidence="1">
    <location>
        <position position="300"/>
    </location>
    <ligand>
        <name>Mg(2+)</name>
        <dbReference type="ChEBI" id="CHEBI:18420"/>
        <label>2</label>
    </ligand>
</feature>
<feature type="binding site" evidence="1">
    <location>
        <position position="300"/>
    </location>
    <ligand>
        <name>Mn(2+)</name>
        <dbReference type="ChEBI" id="CHEBI:29035"/>
        <label>2</label>
    </ligand>
</feature>
<feature type="binding site" evidence="1">
    <location>
        <position position="707"/>
    </location>
    <ligand>
        <name>ATP</name>
        <dbReference type="ChEBI" id="CHEBI:30616"/>
        <label>2</label>
    </ligand>
</feature>
<feature type="binding site" evidence="1">
    <location>
        <position position="746"/>
    </location>
    <ligand>
        <name>ATP</name>
        <dbReference type="ChEBI" id="CHEBI:30616"/>
        <label>2</label>
    </ligand>
</feature>
<feature type="binding site" evidence="1">
    <location>
        <position position="748"/>
    </location>
    <ligand>
        <name>ATP</name>
        <dbReference type="ChEBI" id="CHEBI:30616"/>
        <label>2</label>
    </ligand>
</feature>
<feature type="binding site" evidence="1">
    <location>
        <position position="752"/>
    </location>
    <ligand>
        <name>ATP</name>
        <dbReference type="ChEBI" id="CHEBI:30616"/>
        <label>2</label>
    </ligand>
</feature>
<feature type="binding site" evidence="1">
    <location>
        <position position="777"/>
    </location>
    <ligand>
        <name>ATP</name>
        <dbReference type="ChEBI" id="CHEBI:30616"/>
        <label>2</label>
    </ligand>
</feature>
<feature type="binding site" evidence="1">
    <location>
        <position position="778"/>
    </location>
    <ligand>
        <name>ATP</name>
        <dbReference type="ChEBI" id="CHEBI:30616"/>
        <label>2</label>
    </ligand>
</feature>
<feature type="binding site" evidence="1">
    <location>
        <position position="779"/>
    </location>
    <ligand>
        <name>ATP</name>
        <dbReference type="ChEBI" id="CHEBI:30616"/>
        <label>2</label>
    </ligand>
</feature>
<feature type="binding site" evidence="1">
    <location>
        <position position="780"/>
    </location>
    <ligand>
        <name>ATP</name>
        <dbReference type="ChEBI" id="CHEBI:30616"/>
        <label>2</label>
    </ligand>
</feature>
<feature type="binding site" evidence="1">
    <location>
        <position position="820"/>
    </location>
    <ligand>
        <name>ATP</name>
        <dbReference type="ChEBI" id="CHEBI:30616"/>
        <label>2</label>
    </ligand>
</feature>
<feature type="binding site" evidence="1">
    <location>
        <position position="820"/>
    </location>
    <ligand>
        <name>Mg(2+)</name>
        <dbReference type="ChEBI" id="CHEBI:18420"/>
        <label>3</label>
    </ligand>
</feature>
<feature type="binding site" evidence="1">
    <location>
        <position position="820"/>
    </location>
    <ligand>
        <name>Mn(2+)</name>
        <dbReference type="ChEBI" id="CHEBI:29035"/>
        <label>3</label>
    </ligand>
</feature>
<feature type="binding site" evidence="1">
    <location>
        <position position="832"/>
    </location>
    <ligand>
        <name>ATP</name>
        <dbReference type="ChEBI" id="CHEBI:30616"/>
        <label>2</label>
    </ligand>
</feature>
<feature type="binding site" evidence="1">
    <location>
        <position position="832"/>
    </location>
    <ligand>
        <name>Mg(2+)</name>
        <dbReference type="ChEBI" id="CHEBI:18420"/>
        <label>3</label>
    </ligand>
</feature>
<feature type="binding site" evidence="1">
    <location>
        <position position="832"/>
    </location>
    <ligand>
        <name>Mg(2+)</name>
        <dbReference type="ChEBI" id="CHEBI:18420"/>
        <label>4</label>
    </ligand>
</feature>
<feature type="binding site" evidence="1">
    <location>
        <position position="832"/>
    </location>
    <ligand>
        <name>Mn(2+)</name>
        <dbReference type="ChEBI" id="CHEBI:29035"/>
        <label>3</label>
    </ligand>
</feature>
<feature type="binding site" evidence="1">
    <location>
        <position position="832"/>
    </location>
    <ligand>
        <name>Mn(2+)</name>
        <dbReference type="ChEBI" id="CHEBI:29035"/>
        <label>4</label>
    </ligand>
</feature>
<feature type="binding site" evidence="1">
    <location>
        <position position="834"/>
    </location>
    <ligand>
        <name>Mg(2+)</name>
        <dbReference type="ChEBI" id="CHEBI:18420"/>
        <label>4</label>
    </ligand>
</feature>
<feature type="binding site" evidence="1">
    <location>
        <position position="834"/>
    </location>
    <ligand>
        <name>Mn(2+)</name>
        <dbReference type="ChEBI" id="CHEBI:29035"/>
        <label>4</label>
    </ligand>
</feature>
<reference key="1">
    <citation type="submission" date="2007-05" db="EMBL/GenBank/DDBJ databases">
        <title>Complete sequence of chromosome of Staphylococcus aureus subsp. aureus JH9.</title>
        <authorList>
            <consortium name="US DOE Joint Genome Institute"/>
            <person name="Copeland A."/>
            <person name="Lucas S."/>
            <person name="Lapidus A."/>
            <person name="Barry K."/>
            <person name="Detter J.C."/>
            <person name="Glavina del Rio T."/>
            <person name="Hammon N."/>
            <person name="Israni S."/>
            <person name="Pitluck S."/>
            <person name="Chain P."/>
            <person name="Malfatti S."/>
            <person name="Shin M."/>
            <person name="Vergez L."/>
            <person name="Schmutz J."/>
            <person name="Larimer F."/>
            <person name="Land M."/>
            <person name="Hauser L."/>
            <person name="Kyrpides N."/>
            <person name="Kim E."/>
            <person name="Tomasz A."/>
            <person name="Richardson P."/>
        </authorList>
    </citation>
    <scope>NUCLEOTIDE SEQUENCE [LARGE SCALE GENOMIC DNA]</scope>
    <source>
        <strain>JH9</strain>
    </source>
</reference>
<dbReference type="EC" id="6.3.4.16" evidence="1"/>
<dbReference type="EC" id="6.3.5.5" evidence="1"/>
<dbReference type="EMBL" id="CP000703">
    <property type="protein sequence ID" value="ABQ49061.1"/>
    <property type="molecule type" value="Genomic_DNA"/>
</dbReference>
<dbReference type="RefSeq" id="WP_001126259.1">
    <property type="nucleotide sequence ID" value="NC_009487.1"/>
</dbReference>
<dbReference type="SMR" id="A5IS88"/>
<dbReference type="KEGG" id="saj:SaurJH9_1262"/>
<dbReference type="HOGENOM" id="CLU_000513_1_2_9"/>
<dbReference type="UniPathway" id="UPA00068">
    <property type="reaction ID" value="UER00171"/>
</dbReference>
<dbReference type="UniPathway" id="UPA00070">
    <property type="reaction ID" value="UER00115"/>
</dbReference>
<dbReference type="GO" id="GO:0005737">
    <property type="term" value="C:cytoplasm"/>
    <property type="evidence" value="ECO:0007669"/>
    <property type="project" value="TreeGrafter"/>
</dbReference>
<dbReference type="GO" id="GO:0005524">
    <property type="term" value="F:ATP binding"/>
    <property type="evidence" value="ECO:0007669"/>
    <property type="project" value="UniProtKB-UniRule"/>
</dbReference>
<dbReference type="GO" id="GO:0004087">
    <property type="term" value="F:carbamoyl-phosphate synthase (ammonia) activity"/>
    <property type="evidence" value="ECO:0007669"/>
    <property type="project" value="RHEA"/>
</dbReference>
<dbReference type="GO" id="GO:0004088">
    <property type="term" value="F:carbamoyl-phosphate synthase (glutamine-hydrolyzing) activity"/>
    <property type="evidence" value="ECO:0007669"/>
    <property type="project" value="UniProtKB-UniRule"/>
</dbReference>
<dbReference type="GO" id="GO:0046872">
    <property type="term" value="F:metal ion binding"/>
    <property type="evidence" value="ECO:0007669"/>
    <property type="project" value="UniProtKB-KW"/>
</dbReference>
<dbReference type="GO" id="GO:0044205">
    <property type="term" value="P:'de novo' UMP biosynthetic process"/>
    <property type="evidence" value="ECO:0007669"/>
    <property type="project" value="UniProtKB-UniRule"/>
</dbReference>
<dbReference type="GO" id="GO:0006541">
    <property type="term" value="P:glutamine metabolic process"/>
    <property type="evidence" value="ECO:0007669"/>
    <property type="project" value="TreeGrafter"/>
</dbReference>
<dbReference type="GO" id="GO:0006526">
    <property type="term" value="P:L-arginine biosynthetic process"/>
    <property type="evidence" value="ECO:0007669"/>
    <property type="project" value="UniProtKB-UniRule"/>
</dbReference>
<dbReference type="CDD" id="cd01424">
    <property type="entry name" value="MGS_CPS_II"/>
    <property type="match status" value="1"/>
</dbReference>
<dbReference type="FunFam" id="1.10.1030.10:FF:000002">
    <property type="entry name" value="Carbamoyl-phosphate synthase large chain"/>
    <property type="match status" value="1"/>
</dbReference>
<dbReference type="FunFam" id="3.30.1490.20:FF:000001">
    <property type="entry name" value="Carbamoyl-phosphate synthase large chain"/>
    <property type="match status" value="1"/>
</dbReference>
<dbReference type="FunFam" id="3.30.470.20:FF:000001">
    <property type="entry name" value="Carbamoyl-phosphate synthase large chain"/>
    <property type="match status" value="1"/>
</dbReference>
<dbReference type="FunFam" id="3.30.470.20:FF:000026">
    <property type="entry name" value="Carbamoyl-phosphate synthase large chain"/>
    <property type="match status" value="1"/>
</dbReference>
<dbReference type="FunFam" id="3.40.50.1380:FF:000011">
    <property type="entry name" value="Carbamoyl-phosphate synthase large chain"/>
    <property type="match status" value="1"/>
</dbReference>
<dbReference type="FunFam" id="3.40.50.20:FF:000001">
    <property type="entry name" value="Carbamoyl-phosphate synthase large chain"/>
    <property type="match status" value="2"/>
</dbReference>
<dbReference type="Gene3D" id="3.40.50.20">
    <property type="match status" value="2"/>
</dbReference>
<dbReference type="Gene3D" id="3.30.1490.20">
    <property type="entry name" value="ATP-grasp fold, A domain"/>
    <property type="match status" value="1"/>
</dbReference>
<dbReference type="Gene3D" id="3.30.470.20">
    <property type="entry name" value="ATP-grasp fold, B domain"/>
    <property type="match status" value="2"/>
</dbReference>
<dbReference type="Gene3D" id="1.10.1030.10">
    <property type="entry name" value="Carbamoyl-phosphate synthetase, large subunit oligomerisation domain"/>
    <property type="match status" value="1"/>
</dbReference>
<dbReference type="Gene3D" id="3.40.50.1380">
    <property type="entry name" value="Methylglyoxal synthase-like domain"/>
    <property type="match status" value="1"/>
</dbReference>
<dbReference type="HAMAP" id="MF_01210_A">
    <property type="entry name" value="CPSase_L_chain_A"/>
    <property type="match status" value="1"/>
</dbReference>
<dbReference type="HAMAP" id="MF_01210_B">
    <property type="entry name" value="CPSase_L_chain_B"/>
    <property type="match status" value="1"/>
</dbReference>
<dbReference type="InterPro" id="IPR011761">
    <property type="entry name" value="ATP-grasp"/>
</dbReference>
<dbReference type="InterPro" id="IPR013815">
    <property type="entry name" value="ATP_grasp_subdomain_1"/>
</dbReference>
<dbReference type="InterPro" id="IPR006275">
    <property type="entry name" value="CarbamoylP_synth_lsu"/>
</dbReference>
<dbReference type="InterPro" id="IPR005480">
    <property type="entry name" value="CarbamoylP_synth_lsu_oligo"/>
</dbReference>
<dbReference type="InterPro" id="IPR036897">
    <property type="entry name" value="CarbamoylP_synth_lsu_oligo_sf"/>
</dbReference>
<dbReference type="InterPro" id="IPR005479">
    <property type="entry name" value="CbamoylP_synth_lsu-like_ATP-bd"/>
</dbReference>
<dbReference type="InterPro" id="IPR005483">
    <property type="entry name" value="CbamoylP_synth_lsu_CPSase_dom"/>
</dbReference>
<dbReference type="InterPro" id="IPR011607">
    <property type="entry name" value="MGS-like_dom"/>
</dbReference>
<dbReference type="InterPro" id="IPR036914">
    <property type="entry name" value="MGS-like_dom_sf"/>
</dbReference>
<dbReference type="InterPro" id="IPR033937">
    <property type="entry name" value="MGS_CPS_CarB"/>
</dbReference>
<dbReference type="InterPro" id="IPR016185">
    <property type="entry name" value="PreATP-grasp_dom_sf"/>
</dbReference>
<dbReference type="NCBIfam" id="TIGR01369">
    <property type="entry name" value="CPSaseII_lrg"/>
    <property type="match status" value="1"/>
</dbReference>
<dbReference type="NCBIfam" id="NF003671">
    <property type="entry name" value="PRK05294.1"/>
    <property type="match status" value="1"/>
</dbReference>
<dbReference type="NCBIfam" id="NF009455">
    <property type="entry name" value="PRK12815.1"/>
    <property type="match status" value="1"/>
</dbReference>
<dbReference type="PANTHER" id="PTHR11405:SF53">
    <property type="entry name" value="CARBAMOYL-PHOSPHATE SYNTHASE [AMMONIA], MITOCHONDRIAL"/>
    <property type="match status" value="1"/>
</dbReference>
<dbReference type="PANTHER" id="PTHR11405">
    <property type="entry name" value="CARBAMOYLTRANSFERASE FAMILY MEMBER"/>
    <property type="match status" value="1"/>
</dbReference>
<dbReference type="Pfam" id="PF02786">
    <property type="entry name" value="CPSase_L_D2"/>
    <property type="match status" value="2"/>
</dbReference>
<dbReference type="Pfam" id="PF02787">
    <property type="entry name" value="CPSase_L_D3"/>
    <property type="match status" value="1"/>
</dbReference>
<dbReference type="Pfam" id="PF02142">
    <property type="entry name" value="MGS"/>
    <property type="match status" value="1"/>
</dbReference>
<dbReference type="PRINTS" id="PR00098">
    <property type="entry name" value="CPSASE"/>
</dbReference>
<dbReference type="SMART" id="SM01096">
    <property type="entry name" value="CPSase_L_D3"/>
    <property type="match status" value="1"/>
</dbReference>
<dbReference type="SMART" id="SM01209">
    <property type="entry name" value="GARS_A"/>
    <property type="match status" value="1"/>
</dbReference>
<dbReference type="SMART" id="SM00851">
    <property type="entry name" value="MGS"/>
    <property type="match status" value="1"/>
</dbReference>
<dbReference type="SUPFAM" id="SSF48108">
    <property type="entry name" value="Carbamoyl phosphate synthetase, large subunit connection domain"/>
    <property type="match status" value="1"/>
</dbReference>
<dbReference type="SUPFAM" id="SSF56059">
    <property type="entry name" value="Glutathione synthetase ATP-binding domain-like"/>
    <property type="match status" value="2"/>
</dbReference>
<dbReference type="SUPFAM" id="SSF52335">
    <property type="entry name" value="Methylglyoxal synthase-like"/>
    <property type="match status" value="1"/>
</dbReference>
<dbReference type="SUPFAM" id="SSF52440">
    <property type="entry name" value="PreATP-grasp domain"/>
    <property type="match status" value="2"/>
</dbReference>
<dbReference type="PROSITE" id="PS50975">
    <property type="entry name" value="ATP_GRASP"/>
    <property type="match status" value="2"/>
</dbReference>
<dbReference type="PROSITE" id="PS00866">
    <property type="entry name" value="CPSASE_1"/>
    <property type="match status" value="2"/>
</dbReference>
<dbReference type="PROSITE" id="PS00867">
    <property type="entry name" value="CPSASE_2"/>
    <property type="match status" value="2"/>
</dbReference>
<dbReference type="PROSITE" id="PS51855">
    <property type="entry name" value="MGS"/>
    <property type="match status" value="1"/>
</dbReference>